<accession>P0A9B5</accession>
<accession>P06977</accession>
<gene>
    <name type="primary">gapA</name>
    <name type="ordered locus">SF1444</name>
    <name type="ordered locus">S1559</name>
</gene>
<proteinExistence type="inferred from homology"/>
<organism>
    <name type="scientific">Shigella flexneri</name>
    <dbReference type="NCBI Taxonomy" id="623"/>
    <lineage>
        <taxon>Bacteria</taxon>
        <taxon>Pseudomonadati</taxon>
        <taxon>Pseudomonadota</taxon>
        <taxon>Gammaproteobacteria</taxon>
        <taxon>Enterobacterales</taxon>
        <taxon>Enterobacteriaceae</taxon>
        <taxon>Shigella</taxon>
    </lineage>
</organism>
<name>G3P_SHIFL</name>
<evidence type="ECO:0000250" key="1">
    <source>
        <dbReference type="UniProtKB" id="P0A9B2"/>
    </source>
</evidence>
<evidence type="ECO:0000305" key="2"/>
<sequence>MTIKVGINGFGRIGRIVFRAAQKRSDIEIVAINDLLDADYMAYMLKYDSTHGRFDGTVEVKDGHLIVNGKKIRVTAERDPANLKWDEVGVDVVAEATGLFLTDETARKHITAGAKKVVMTGPSKDNTPMFVKGANFDKYAGQDIVSNASCTTNCLAPLAKVINDNFGIIEGLMTTVHATTATQKTVDGPSHKDWRGGRGASQNIIPSSTGAAKAVGKVLPELNGKLTGMAFRVPTPNVSVVDLTVRLEKAATYEQIKAAVKAAAEGEMKGVLGYTEDDVVSTDFNGEVCTSVFDAKAGIALNDNFVKLVSWYDNETGYSNKVLDLIAHISK</sequence>
<comment type="function">
    <text evidence="1">Catalyzes the oxidative phosphorylation of glyceraldehyde 3-phosphate (G3P) to 1,3-bisphosphoglycerate (BPG) using the cofactor NAD. The first reaction step involves the formation of a hemiacetal intermediate between G3P and a cysteine residue, and this hemiacetal intermediate is then oxidized to a thioester, with concomitant reduction of NAD to NADH. The reduced NADH is then exchanged with the second NAD, and the thioester is attacked by a nucleophilic inorganic phosphate to produce BPG.</text>
</comment>
<comment type="catalytic activity">
    <reaction evidence="1">
        <text>D-glyceraldehyde 3-phosphate + phosphate + NAD(+) = (2R)-3-phospho-glyceroyl phosphate + NADH + H(+)</text>
        <dbReference type="Rhea" id="RHEA:10300"/>
        <dbReference type="ChEBI" id="CHEBI:15378"/>
        <dbReference type="ChEBI" id="CHEBI:43474"/>
        <dbReference type="ChEBI" id="CHEBI:57540"/>
        <dbReference type="ChEBI" id="CHEBI:57604"/>
        <dbReference type="ChEBI" id="CHEBI:57945"/>
        <dbReference type="ChEBI" id="CHEBI:59776"/>
        <dbReference type="EC" id="1.2.1.12"/>
    </reaction>
</comment>
<comment type="pathway">
    <text evidence="2">Carbohydrate degradation; glycolysis; pyruvate from D-glyceraldehyde 3-phosphate: step 1/5.</text>
</comment>
<comment type="subunit">
    <text evidence="1">Homotetramer.</text>
</comment>
<comment type="subcellular location">
    <subcellularLocation>
        <location evidence="2">Cytoplasm</location>
    </subcellularLocation>
</comment>
<comment type="similarity">
    <text evidence="2">Belongs to the glyceraldehyde-3-phosphate dehydrogenase family.</text>
</comment>
<protein>
    <recommendedName>
        <fullName evidence="1">Glyceraldehyde-3-phosphate dehydrogenase</fullName>
        <shortName evidence="1">GAPDH</shortName>
        <ecNumber evidence="1">1.2.1.12</ecNumber>
    </recommendedName>
    <alternativeName>
        <fullName evidence="1">NAD-dependent glyceraldehyde-3-phosphate dehydrogenase</fullName>
    </alternativeName>
</protein>
<keyword id="KW-0007">Acetylation</keyword>
<keyword id="KW-0963">Cytoplasm</keyword>
<keyword id="KW-0324">Glycolysis</keyword>
<keyword id="KW-0520">NAD</keyword>
<keyword id="KW-0547">Nucleotide-binding</keyword>
<keyword id="KW-0560">Oxidoreductase</keyword>
<keyword id="KW-1185">Reference proteome</keyword>
<feature type="initiator methionine" description="Removed" evidence="2">
    <location>
        <position position="1"/>
    </location>
</feature>
<feature type="chain" id="PRO_0000145678" description="Glyceraldehyde-3-phosphate dehydrogenase">
    <location>
        <begin position="2"/>
        <end position="331"/>
    </location>
</feature>
<feature type="active site" description="Nucleophile" evidence="1">
    <location>
        <position position="150"/>
    </location>
</feature>
<feature type="binding site" evidence="1">
    <location>
        <begin position="12"/>
        <end position="13"/>
    </location>
    <ligand>
        <name>NAD(+)</name>
        <dbReference type="ChEBI" id="CHEBI:57540"/>
    </ligand>
</feature>
<feature type="binding site" evidence="1">
    <location>
        <position position="34"/>
    </location>
    <ligand>
        <name>NAD(+)</name>
        <dbReference type="ChEBI" id="CHEBI:57540"/>
    </ligand>
</feature>
<feature type="binding site" evidence="1">
    <location>
        <position position="78"/>
    </location>
    <ligand>
        <name>NAD(+)</name>
        <dbReference type="ChEBI" id="CHEBI:57540"/>
    </ligand>
</feature>
<feature type="binding site" evidence="1">
    <location>
        <position position="120"/>
    </location>
    <ligand>
        <name>NAD(+)</name>
        <dbReference type="ChEBI" id="CHEBI:57540"/>
    </ligand>
</feature>
<feature type="binding site" evidence="1">
    <location>
        <begin position="149"/>
        <end position="151"/>
    </location>
    <ligand>
        <name>D-glyceraldehyde 3-phosphate</name>
        <dbReference type="ChEBI" id="CHEBI:59776"/>
    </ligand>
</feature>
<feature type="binding site" evidence="1">
    <location>
        <position position="180"/>
    </location>
    <ligand>
        <name>D-glyceraldehyde 3-phosphate</name>
        <dbReference type="ChEBI" id="CHEBI:59776"/>
    </ligand>
</feature>
<feature type="binding site" evidence="1">
    <location>
        <begin position="209"/>
        <end position="210"/>
    </location>
    <ligand>
        <name>D-glyceraldehyde 3-phosphate</name>
        <dbReference type="ChEBI" id="CHEBI:59776"/>
    </ligand>
</feature>
<feature type="binding site" evidence="1">
    <location>
        <position position="232"/>
    </location>
    <ligand>
        <name>D-glyceraldehyde 3-phosphate</name>
        <dbReference type="ChEBI" id="CHEBI:59776"/>
    </ligand>
</feature>
<feature type="binding site" evidence="1">
    <location>
        <position position="314"/>
    </location>
    <ligand>
        <name>NAD(+)</name>
        <dbReference type="ChEBI" id="CHEBI:57540"/>
    </ligand>
</feature>
<feature type="site" description="Activates thiol group during catalysis" evidence="1">
    <location>
        <position position="177"/>
    </location>
</feature>
<feature type="modified residue" description="N6-acetyllysine" evidence="1">
    <location>
        <position position="132"/>
    </location>
</feature>
<feature type="modified residue" description="N6-acetyllysine" evidence="1">
    <location>
        <position position="138"/>
    </location>
</feature>
<feature type="modified residue" description="N6-acetyllysine" evidence="1">
    <location>
        <position position="192"/>
    </location>
</feature>
<feature type="modified residue" description="N6-acetyllysine" evidence="1">
    <location>
        <position position="249"/>
    </location>
</feature>
<dbReference type="EC" id="1.2.1.12" evidence="1"/>
<dbReference type="EMBL" id="AE005674">
    <property type="protein sequence ID" value="AAN43042.2"/>
    <property type="molecule type" value="Genomic_DNA"/>
</dbReference>
<dbReference type="EMBL" id="AE014073">
    <property type="protein sequence ID" value="AAP16937.1"/>
    <property type="molecule type" value="Genomic_DNA"/>
</dbReference>
<dbReference type="RefSeq" id="NP_707335.2">
    <property type="nucleotide sequence ID" value="NC_004337.2"/>
</dbReference>
<dbReference type="RefSeq" id="WP_000153502.1">
    <property type="nucleotide sequence ID" value="NZ_WPGW01000090.1"/>
</dbReference>
<dbReference type="SMR" id="P0A9B5"/>
<dbReference type="STRING" id="198214.SF1444"/>
<dbReference type="PaxDb" id="198214-SF1444"/>
<dbReference type="GeneID" id="1024650"/>
<dbReference type="GeneID" id="93775988"/>
<dbReference type="KEGG" id="sfl:SF1444"/>
<dbReference type="KEGG" id="sfx:S1559"/>
<dbReference type="PATRIC" id="fig|198214.7.peg.1700"/>
<dbReference type="HOGENOM" id="CLU_030140_0_3_6"/>
<dbReference type="UniPathway" id="UPA00109">
    <property type="reaction ID" value="UER00184"/>
</dbReference>
<dbReference type="Proteomes" id="UP000001006">
    <property type="component" value="Chromosome"/>
</dbReference>
<dbReference type="Proteomes" id="UP000002673">
    <property type="component" value="Chromosome"/>
</dbReference>
<dbReference type="GO" id="GO:0005737">
    <property type="term" value="C:cytoplasm"/>
    <property type="evidence" value="ECO:0007669"/>
    <property type="project" value="UniProtKB-SubCell"/>
</dbReference>
<dbReference type="GO" id="GO:0004365">
    <property type="term" value="F:glyceraldehyde-3-phosphate dehydrogenase (NAD+) (phosphorylating) activity"/>
    <property type="evidence" value="ECO:0000250"/>
    <property type="project" value="UniProtKB"/>
</dbReference>
<dbReference type="GO" id="GO:0051287">
    <property type="term" value="F:NAD binding"/>
    <property type="evidence" value="ECO:0000250"/>
    <property type="project" value="UniProtKB"/>
</dbReference>
<dbReference type="GO" id="GO:0050661">
    <property type="term" value="F:NADP binding"/>
    <property type="evidence" value="ECO:0007669"/>
    <property type="project" value="InterPro"/>
</dbReference>
<dbReference type="GO" id="GO:0006006">
    <property type="term" value="P:glucose metabolic process"/>
    <property type="evidence" value="ECO:0007669"/>
    <property type="project" value="InterPro"/>
</dbReference>
<dbReference type="GO" id="GO:0006096">
    <property type="term" value="P:glycolytic process"/>
    <property type="evidence" value="ECO:0007669"/>
    <property type="project" value="UniProtKB-UniPathway"/>
</dbReference>
<dbReference type="CDD" id="cd18126">
    <property type="entry name" value="GAPDH_I_C"/>
    <property type="match status" value="1"/>
</dbReference>
<dbReference type="CDD" id="cd05214">
    <property type="entry name" value="GAPDH_I_N"/>
    <property type="match status" value="1"/>
</dbReference>
<dbReference type="FunFam" id="3.30.360.10:FF:000001">
    <property type="entry name" value="Glyceraldehyde-3-phosphate dehydrogenase"/>
    <property type="match status" value="1"/>
</dbReference>
<dbReference type="FunFam" id="3.40.50.720:FF:000001">
    <property type="entry name" value="Glyceraldehyde-3-phosphate dehydrogenase"/>
    <property type="match status" value="1"/>
</dbReference>
<dbReference type="Gene3D" id="3.30.360.10">
    <property type="entry name" value="Dihydrodipicolinate Reductase, domain 2"/>
    <property type="match status" value="1"/>
</dbReference>
<dbReference type="Gene3D" id="3.40.50.720">
    <property type="entry name" value="NAD(P)-binding Rossmann-like Domain"/>
    <property type="match status" value="1"/>
</dbReference>
<dbReference type="InterPro" id="IPR020831">
    <property type="entry name" value="GlycerAld/Erythrose_P_DH"/>
</dbReference>
<dbReference type="InterPro" id="IPR020830">
    <property type="entry name" value="GlycerAld_3-P_DH_AS"/>
</dbReference>
<dbReference type="InterPro" id="IPR020829">
    <property type="entry name" value="GlycerAld_3-P_DH_cat"/>
</dbReference>
<dbReference type="InterPro" id="IPR020828">
    <property type="entry name" value="GlycerAld_3-P_DH_NAD(P)-bd"/>
</dbReference>
<dbReference type="InterPro" id="IPR006424">
    <property type="entry name" value="Glyceraldehyde-3-P_DH_1"/>
</dbReference>
<dbReference type="InterPro" id="IPR036291">
    <property type="entry name" value="NAD(P)-bd_dom_sf"/>
</dbReference>
<dbReference type="NCBIfam" id="TIGR01534">
    <property type="entry name" value="GAPDH-I"/>
    <property type="match status" value="1"/>
</dbReference>
<dbReference type="NCBIfam" id="NF011954">
    <property type="entry name" value="PRK15425.1"/>
    <property type="match status" value="1"/>
</dbReference>
<dbReference type="PANTHER" id="PTHR10836">
    <property type="entry name" value="GLYCERALDEHYDE 3-PHOSPHATE DEHYDROGENASE"/>
    <property type="match status" value="1"/>
</dbReference>
<dbReference type="PANTHER" id="PTHR10836:SF76">
    <property type="entry name" value="GLYCERALDEHYDE-3-PHOSPHATE DEHYDROGENASE-RELATED"/>
    <property type="match status" value="1"/>
</dbReference>
<dbReference type="Pfam" id="PF02800">
    <property type="entry name" value="Gp_dh_C"/>
    <property type="match status" value="1"/>
</dbReference>
<dbReference type="Pfam" id="PF00044">
    <property type="entry name" value="Gp_dh_N"/>
    <property type="match status" value="1"/>
</dbReference>
<dbReference type="PIRSF" id="PIRSF000149">
    <property type="entry name" value="GAP_DH"/>
    <property type="match status" value="1"/>
</dbReference>
<dbReference type="PRINTS" id="PR00078">
    <property type="entry name" value="G3PDHDRGNASE"/>
</dbReference>
<dbReference type="SMART" id="SM00846">
    <property type="entry name" value="Gp_dh_N"/>
    <property type="match status" value="1"/>
</dbReference>
<dbReference type="SUPFAM" id="SSF55347">
    <property type="entry name" value="Glyceraldehyde-3-phosphate dehydrogenase-like, C-terminal domain"/>
    <property type="match status" value="1"/>
</dbReference>
<dbReference type="SUPFAM" id="SSF51735">
    <property type="entry name" value="NAD(P)-binding Rossmann-fold domains"/>
    <property type="match status" value="1"/>
</dbReference>
<dbReference type="PROSITE" id="PS00071">
    <property type="entry name" value="GAPDH"/>
    <property type="match status" value="1"/>
</dbReference>
<reference key="1">
    <citation type="journal article" date="2002" name="Nucleic Acids Res.">
        <title>Genome sequence of Shigella flexneri 2a: insights into pathogenicity through comparison with genomes of Escherichia coli K12 and O157.</title>
        <authorList>
            <person name="Jin Q."/>
            <person name="Yuan Z."/>
            <person name="Xu J."/>
            <person name="Wang Y."/>
            <person name="Shen Y."/>
            <person name="Lu W."/>
            <person name="Wang J."/>
            <person name="Liu H."/>
            <person name="Yang J."/>
            <person name="Yang F."/>
            <person name="Zhang X."/>
            <person name="Zhang J."/>
            <person name="Yang G."/>
            <person name="Wu H."/>
            <person name="Qu D."/>
            <person name="Dong J."/>
            <person name="Sun L."/>
            <person name="Xue Y."/>
            <person name="Zhao A."/>
            <person name="Gao Y."/>
            <person name="Zhu J."/>
            <person name="Kan B."/>
            <person name="Ding K."/>
            <person name="Chen S."/>
            <person name="Cheng H."/>
            <person name="Yao Z."/>
            <person name="He B."/>
            <person name="Chen R."/>
            <person name="Ma D."/>
            <person name="Qiang B."/>
            <person name="Wen Y."/>
            <person name="Hou Y."/>
            <person name="Yu J."/>
        </authorList>
    </citation>
    <scope>NUCLEOTIDE SEQUENCE [LARGE SCALE GENOMIC DNA]</scope>
    <source>
        <strain>301 / Serotype 2a</strain>
    </source>
</reference>
<reference key="2">
    <citation type="journal article" date="2003" name="Infect. Immun.">
        <title>Complete genome sequence and comparative genomics of Shigella flexneri serotype 2a strain 2457T.</title>
        <authorList>
            <person name="Wei J."/>
            <person name="Goldberg M.B."/>
            <person name="Burland V."/>
            <person name="Venkatesan M.M."/>
            <person name="Deng W."/>
            <person name="Fournier G."/>
            <person name="Mayhew G.F."/>
            <person name="Plunkett G. III"/>
            <person name="Rose D.J."/>
            <person name="Darling A."/>
            <person name="Mau B."/>
            <person name="Perna N.T."/>
            <person name="Payne S.M."/>
            <person name="Runyen-Janecky L.J."/>
            <person name="Zhou S."/>
            <person name="Schwartz D.C."/>
            <person name="Blattner F.R."/>
        </authorList>
    </citation>
    <scope>NUCLEOTIDE SEQUENCE [LARGE SCALE GENOMIC DNA]</scope>
    <source>
        <strain>ATCC 700930 / 2457T / Serotype 2a</strain>
    </source>
</reference>